<feature type="chain" id="PRO_0000286476" description="ADP,ATP carrier protein 4">
    <location>
        <begin position="1"/>
        <end position="511"/>
    </location>
</feature>
<feature type="transmembrane region" description="Helical" evidence="2">
    <location>
        <begin position="34"/>
        <end position="54"/>
    </location>
</feature>
<feature type="transmembrane region" description="Helical" evidence="2">
    <location>
        <begin position="71"/>
        <end position="91"/>
    </location>
</feature>
<feature type="transmembrane region" description="Helical" evidence="2">
    <location>
        <begin position="102"/>
        <end position="122"/>
    </location>
</feature>
<feature type="transmembrane region" description="Helical" evidence="2">
    <location>
        <begin position="157"/>
        <end position="177"/>
    </location>
</feature>
<feature type="transmembrane region" description="Helical" evidence="2">
    <location>
        <begin position="192"/>
        <end position="212"/>
    </location>
</feature>
<feature type="transmembrane region" description="Helical" evidence="2">
    <location>
        <begin position="231"/>
        <end position="251"/>
    </location>
</feature>
<feature type="transmembrane region" description="Helical" evidence="2">
    <location>
        <begin position="296"/>
        <end position="316"/>
    </location>
</feature>
<feature type="transmembrane region" description="Helical" evidence="2">
    <location>
        <begin position="330"/>
        <end position="350"/>
    </location>
</feature>
<feature type="transmembrane region" description="Helical" evidence="2">
    <location>
        <begin position="361"/>
        <end position="381"/>
    </location>
</feature>
<feature type="transmembrane region" description="Helical" evidence="2">
    <location>
        <begin position="390"/>
        <end position="410"/>
    </location>
</feature>
<feature type="transmembrane region" description="Helical" evidence="2">
    <location>
        <begin position="453"/>
        <end position="473"/>
    </location>
</feature>
<feature type="transmembrane region" description="Helical" evidence="2">
    <location>
        <begin position="476"/>
        <end position="496"/>
    </location>
</feature>
<organism>
    <name type="scientific">Rickettsia felis (strain ATCC VR-1525 / URRWXCal2)</name>
    <name type="common">Rickettsia azadi</name>
    <dbReference type="NCBI Taxonomy" id="315456"/>
    <lineage>
        <taxon>Bacteria</taxon>
        <taxon>Pseudomonadati</taxon>
        <taxon>Pseudomonadota</taxon>
        <taxon>Alphaproteobacteria</taxon>
        <taxon>Rickettsiales</taxon>
        <taxon>Rickettsiaceae</taxon>
        <taxon>Rickettsieae</taxon>
        <taxon>Rickettsia</taxon>
        <taxon>spotted fever group</taxon>
    </lineage>
</organism>
<proteinExistence type="inferred from homology"/>
<dbReference type="EMBL" id="CP000053">
    <property type="protein sequence ID" value="AAY61575.1"/>
    <property type="molecule type" value="Genomic_DNA"/>
</dbReference>
<dbReference type="STRING" id="315456.RF_0724"/>
<dbReference type="KEGG" id="rfe:RF_0724"/>
<dbReference type="eggNOG" id="COG3202">
    <property type="taxonomic scope" value="Bacteria"/>
</dbReference>
<dbReference type="HOGENOM" id="CLU_023964_0_1_5"/>
<dbReference type="OrthoDB" id="19786at2"/>
<dbReference type="Proteomes" id="UP000008548">
    <property type="component" value="Chromosome"/>
</dbReference>
<dbReference type="GO" id="GO:0005886">
    <property type="term" value="C:plasma membrane"/>
    <property type="evidence" value="ECO:0007669"/>
    <property type="project" value="UniProtKB-SubCell"/>
</dbReference>
<dbReference type="GO" id="GO:0005524">
    <property type="term" value="F:ATP binding"/>
    <property type="evidence" value="ECO:0007669"/>
    <property type="project" value="UniProtKB-KW"/>
</dbReference>
<dbReference type="GO" id="GO:0005471">
    <property type="term" value="F:ATP:ADP antiporter activity"/>
    <property type="evidence" value="ECO:0007669"/>
    <property type="project" value="InterPro"/>
</dbReference>
<dbReference type="InterPro" id="IPR004667">
    <property type="entry name" value="ADP_ATP_car_bac_type"/>
</dbReference>
<dbReference type="InterPro" id="IPR036259">
    <property type="entry name" value="MFS_trans_sf"/>
</dbReference>
<dbReference type="NCBIfam" id="TIGR00769">
    <property type="entry name" value="AAA"/>
    <property type="match status" value="1"/>
</dbReference>
<dbReference type="PANTHER" id="PTHR31187">
    <property type="match status" value="1"/>
</dbReference>
<dbReference type="PANTHER" id="PTHR31187:SF1">
    <property type="entry name" value="ADP,ATP CARRIER PROTEIN 1"/>
    <property type="match status" value="1"/>
</dbReference>
<dbReference type="Pfam" id="PF03219">
    <property type="entry name" value="TLC"/>
    <property type="match status" value="1"/>
</dbReference>
<dbReference type="SUPFAM" id="SSF103473">
    <property type="entry name" value="MFS general substrate transporter"/>
    <property type="match status" value="1"/>
</dbReference>
<comment type="function">
    <text evidence="1">Provides the rickettsial cell with host ATP in exchange for rickettsial ADP. This is an obligate exchange system. This energy acquiring activity is an important component of rickettsial parasitism (By similarity).</text>
</comment>
<comment type="subcellular location">
    <subcellularLocation>
        <location>Cell membrane</location>
        <topology>Multi-pass membrane protein</topology>
    </subcellularLocation>
</comment>
<comment type="similarity">
    <text evidence="3">Belongs to the ADP/ATP translocase tlc family.</text>
</comment>
<evidence type="ECO:0000250" key="1"/>
<evidence type="ECO:0000255" key="2"/>
<evidence type="ECO:0000305" key="3"/>
<sequence>MTINSSNIENPPSKINSRFSKLTDYIWPIKRHEVSKFLFITLLMFCILFIQNLIRALKDSIVTTMIGAETISFLKFWGVMPSAFLMTAIYVKLVNRMKAENIFYLIISIFLAFFALFAYVIFPNHEILHLSPVTVQNLTANLLNLKWFILLLSKWSFSLFYIIAELWPNVVFALLFWQFVNNITTVEESKRFYPLFGLLSQTGIYLAGQFLENLSNINDYVTNKFALQSSFHTLSIQIILTIVLILGIIAIKTFWLLNHKVLDKEHMALLKFKAKKKSMTIAESFQMILSSRHIRLIATLLICYGIAINLVEGPWKAAATKIYKTPTEYAAFIGSYLSYTGVFTILFVVLGSNIVRRLGWFTAAVITPLIVFITGILFFAVNNFEGFAGLIIANFILTDPALIAITIGAIQNVLSKSSKYTLFDSTKEMAYVPLDPEIKIKGKAAADVIGTKLGKSGSAFLQSLVFIILPSASYQSISICLMIIFIITCLTWLWATKELNKEYKNSIKFSQ</sequence>
<protein>
    <recommendedName>
        <fullName>ADP,ATP carrier protein 4</fullName>
    </recommendedName>
    <alternativeName>
        <fullName>ADP/ATP translocase 4</fullName>
    </alternativeName>
</protein>
<accession>Q4ULJ8</accession>
<keyword id="KW-0067">ATP-binding</keyword>
<keyword id="KW-1003">Cell membrane</keyword>
<keyword id="KW-0472">Membrane</keyword>
<keyword id="KW-0547">Nucleotide-binding</keyword>
<keyword id="KW-0812">Transmembrane</keyword>
<keyword id="KW-1133">Transmembrane helix</keyword>
<keyword id="KW-0813">Transport</keyword>
<gene>
    <name type="primary">tlcD</name>
    <name type="synonym">tlc4</name>
    <name type="ordered locus">RF_0724</name>
</gene>
<reference key="1">
    <citation type="journal article" date="2005" name="PLoS Biol.">
        <title>The genome sequence of Rickettsia felis identifies the first putative conjugative plasmid in an obligate intracellular parasite.</title>
        <authorList>
            <person name="Ogata H."/>
            <person name="Renesto P."/>
            <person name="Audic S."/>
            <person name="Robert C."/>
            <person name="Blanc G."/>
            <person name="Fournier P.-E."/>
            <person name="Parinello H."/>
            <person name="Claverie J.-M."/>
            <person name="Raoult D."/>
        </authorList>
    </citation>
    <scope>NUCLEOTIDE SEQUENCE [LARGE SCALE GENOMIC DNA]</scope>
    <source>
        <strain>ATCC VR-1525 / URRWXCal2</strain>
    </source>
</reference>
<name>TLCD_RICFE</name>